<sequence length="178" mass="19210">MAESTTLARPYAKAAFELARDAGQLSEWSALLALTAAVAGDSNMHKVLNHPALTSAQKGQTFLDVCEGKLNEAGANFVRVLAENNRLVLLPEIAALFEQLKAQQEATIEVTIESAFEMNDEQENKLAQALQKKLSRNVNLRSQLNKELIGGIVVRAGDLVIDASVRGRLAKLAEAVNS</sequence>
<gene>
    <name evidence="1" type="primary">atpH</name>
    <name type="ordered locus">HCH_07075</name>
</gene>
<feature type="chain" id="PRO_0000370997" description="ATP synthase subunit delta">
    <location>
        <begin position="1"/>
        <end position="178"/>
    </location>
</feature>
<dbReference type="EMBL" id="CP000155">
    <property type="protein sequence ID" value="ABC33686.1"/>
    <property type="molecule type" value="Genomic_DNA"/>
</dbReference>
<dbReference type="RefSeq" id="WP_011400736.1">
    <property type="nucleotide sequence ID" value="NC_007645.1"/>
</dbReference>
<dbReference type="SMR" id="Q2S6N8"/>
<dbReference type="STRING" id="349521.HCH_07075"/>
<dbReference type="KEGG" id="hch:HCH_07075"/>
<dbReference type="eggNOG" id="COG0712">
    <property type="taxonomic scope" value="Bacteria"/>
</dbReference>
<dbReference type="HOGENOM" id="CLU_085114_3_0_6"/>
<dbReference type="OrthoDB" id="9816221at2"/>
<dbReference type="Proteomes" id="UP000000238">
    <property type="component" value="Chromosome"/>
</dbReference>
<dbReference type="GO" id="GO:0005886">
    <property type="term" value="C:plasma membrane"/>
    <property type="evidence" value="ECO:0007669"/>
    <property type="project" value="UniProtKB-SubCell"/>
</dbReference>
<dbReference type="GO" id="GO:0045259">
    <property type="term" value="C:proton-transporting ATP synthase complex"/>
    <property type="evidence" value="ECO:0007669"/>
    <property type="project" value="UniProtKB-KW"/>
</dbReference>
<dbReference type="GO" id="GO:0046933">
    <property type="term" value="F:proton-transporting ATP synthase activity, rotational mechanism"/>
    <property type="evidence" value="ECO:0007669"/>
    <property type="project" value="UniProtKB-UniRule"/>
</dbReference>
<dbReference type="Gene3D" id="1.10.520.20">
    <property type="entry name" value="N-terminal domain of the delta subunit of the F1F0-ATP synthase"/>
    <property type="match status" value="1"/>
</dbReference>
<dbReference type="HAMAP" id="MF_01416">
    <property type="entry name" value="ATP_synth_delta_bact"/>
    <property type="match status" value="1"/>
</dbReference>
<dbReference type="InterPro" id="IPR026015">
    <property type="entry name" value="ATP_synth_OSCP/delta_N_sf"/>
</dbReference>
<dbReference type="InterPro" id="IPR020781">
    <property type="entry name" value="ATPase_OSCP/d_CS"/>
</dbReference>
<dbReference type="InterPro" id="IPR000711">
    <property type="entry name" value="ATPase_OSCP/dsu"/>
</dbReference>
<dbReference type="NCBIfam" id="TIGR01145">
    <property type="entry name" value="ATP_synt_delta"/>
    <property type="match status" value="1"/>
</dbReference>
<dbReference type="NCBIfam" id="NF004402">
    <property type="entry name" value="PRK05758.2-2"/>
    <property type="match status" value="1"/>
</dbReference>
<dbReference type="PANTHER" id="PTHR11910">
    <property type="entry name" value="ATP SYNTHASE DELTA CHAIN"/>
    <property type="match status" value="1"/>
</dbReference>
<dbReference type="Pfam" id="PF00213">
    <property type="entry name" value="OSCP"/>
    <property type="match status" value="1"/>
</dbReference>
<dbReference type="PRINTS" id="PR00125">
    <property type="entry name" value="ATPASEDELTA"/>
</dbReference>
<dbReference type="SUPFAM" id="SSF47928">
    <property type="entry name" value="N-terminal domain of the delta subunit of the F1F0-ATP synthase"/>
    <property type="match status" value="1"/>
</dbReference>
<dbReference type="PROSITE" id="PS00389">
    <property type="entry name" value="ATPASE_DELTA"/>
    <property type="match status" value="1"/>
</dbReference>
<organism>
    <name type="scientific">Hahella chejuensis (strain KCTC 2396)</name>
    <dbReference type="NCBI Taxonomy" id="349521"/>
    <lineage>
        <taxon>Bacteria</taxon>
        <taxon>Pseudomonadati</taxon>
        <taxon>Pseudomonadota</taxon>
        <taxon>Gammaproteobacteria</taxon>
        <taxon>Oceanospirillales</taxon>
        <taxon>Hahellaceae</taxon>
        <taxon>Hahella</taxon>
    </lineage>
</organism>
<keyword id="KW-0066">ATP synthesis</keyword>
<keyword id="KW-0997">Cell inner membrane</keyword>
<keyword id="KW-1003">Cell membrane</keyword>
<keyword id="KW-0139">CF(1)</keyword>
<keyword id="KW-0375">Hydrogen ion transport</keyword>
<keyword id="KW-0406">Ion transport</keyword>
<keyword id="KW-0472">Membrane</keyword>
<keyword id="KW-1185">Reference proteome</keyword>
<keyword id="KW-0813">Transport</keyword>
<accession>Q2S6N8</accession>
<protein>
    <recommendedName>
        <fullName evidence="1">ATP synthase subunit delta</fullName>
    </recommendedName>
    <alternativeName>
        <fullName evidence="1">ATP synthase F(1) sector subunit delta</fullName>
    </alternativeName>
    <alternativeName>
        <fullName evidence="1">F-type ATPase subunit delta</fullName>
        <shortName evidence="1">F-ATPase subunit delta</shortName>
    </alternativeName>
</protein>
<proteinExistence type="inferred from homology"/>
<name>ATPD_HAHCH</name>
<evidence type="ECO:0000255" key="1">
    <source>
        <dbReference type="HAMAP-Rule" id="MF_01416"/>
    </source>
</evidence>
<comment type="function">
    <text evidence="1">F(1)F(0) ATP synthase produces ATP from ADP in the presence of a proton or sodium gradient. F-type ATPases consist of two structural domains, F(1) containing the extramembraneous catalytic core and F(0) containing the membrane proton channel, linked together by a central stalk and a peripheral stalk. During catalysis, ATP synthesis in the catalytic domain of F(1) is coupled via a rotary mechanism of the central stalk subunits to proton translocation.</text>
</comment>
<comment type="function">
    <text evidence="1">This protein is part of the stalk that links CF(0) to CF(1). It either transmits conformational changes from CF(0) to CF(1) or is implicated in proton conduction.</text>
</comment>
<comment type="subunit">
    <text evidence="1">F-type ATPases have 2 components, F(1) - the catalytic core - and F(0) - the membrane proton channel. F(1) has five subunits: alpha(3), beta(3), gamma(1), delta(1), epsilon(1). F(0) has three main subunits: a(1), b(2) and c(10-14). The alpha and beta chains form an alternating ring which encloses part of the gamma chain. F(1) is attached to F(0) by a central stalk formed by the gamma and epsilon chains, while a peripheral stalk is formed by the delta and b chains.</text>
</comment>
<comment type="subcellular location">
    <subcellularLocation>
        <location evidence="1">Cell inner membrane</location>
        <topology evidence="1">Peripheral membrane protein</topology>
    </subcellularLocation>
</comment>
<comment type="similarity">
    <text evidence="1">Belongs to the ATPase delta chain family.</text>
</comment>
<reference key="1">
    <citation type="journal article" date="2005" name="Nucleic Acids Res.">
        <title>Genomic blueprint of Hahella chejuensis, a marine microbe producing an algicidal agent.</title>
        <authorList>
            <person name="Jeong H."/>
            <person name="Yim J.H."/>
            <person name="Lee C."/>
            <person name="Choi S.-H."/>
            <person name="Park Y.K."/>
            <person name="Yoon S.H."/>
            <person name="Hur C.-G."/>
            <person name="Kang H.-Y."/>
            <person name="Kim D."/>
            <person name="Lee H.H."/>
            <person name="Park K.H."/>
            <person name="Park S.-H."/>
            <person name="Park H.-S."/>
            <person name="Lee H.K."/>
            <person name="Oh T.K."/>
            <person name="Kim J.F."/>
        </authorList>
    </citation>
    <scope>NUCLEOTIDE SEQUENCE [LARGE SCALE GENOMIC DNA]</scope>
    <source>
        <strain>KCTC 2396</strain>
    </source>
</reference>